<sequence>MRFKEVGLLFCQLLAVLIFAAGFFPQKKVLKGDAQFQYMAETQRALEPAFDKLVLVVIDALRADFLFQQNVSHFDFVHELLNRGEAWGFTAYSNPPTVTLPRLKGITTGSAPNFLDAILNVAEDDSSSNLKDQDSWISQFAKHGKKIHFFGDDTWLKLFPEEFFQKHDGTNSFFVSDFEEVDTNVTRHLPHELQHKDWDVLILHYLGLDHIGHKGGAASQFMPPKHREMDAVIRQIYDQVDNRTLLCVMGDHGMNDLGNHGGSSAGETSAGMVFISKMLSSYPRPAAQDGVSSPVTAAEDYQFFTRIQQVDFVPTIASLFNIPIPKNSLGVFVREFSSLLGQHATTKIIENYHQLMQLAAKKTAARGNDDIDSMLAEMKDVQATLARTATNYNYAMLFLGVGMLSIVTAATAYCYISSARLNEASVLMIAVTALLGSSVFGSSFVEEEHQIWWWIIIAVVGYSWATRPSCTPSHLVFLVCARLLRGWNNSGQKFMYDFTVAELLKSHPSIKWLLVCATLAVVALDGFTERPLLSIFNLLAGLLCFVYKTCWANVNGEVSPTYAQTLVTKACSLLFAGGTPWDDKQLLVPLARLFFKVTAAIVCMRIAYNVVFAKRKFLSELFPLFTIVLIMQTASQNIPLFLVFTIMRSSLRNILRVGYPQQRCEMFFVLSLILQNLSFFQFGGTNSIATIDLTNSYNGISENYNIYVVGLLMCIGNMAPAIYWSLAAVVDHQLYSKKSYAQQKLSSMFFYSVNSLLLLVACICMRYHLFIWSVFSPKLCYLLGWNILIHFLTETVLEPFLLMVAG</sequence>
<gene>
    <name type="primary">LAS21</name>
    <name type="synonym">GPI7</name>
    <name type="ordered locus">AEL166C</name>
</gene>
<comment type="function">
    <text evidence="1">Ethanolamine phosphate transferase involved in glycosylphosphatidylinositol-anchor biosynthesis. Transfers ethanolamine phosphate to the GPI second mannose (By similarity).</text>
</comment>
<comment type="pathway">
    <text>Glycolipid biosynthesis; glycosylphosphatidylinositol-anchor biosynthesis.</text>
</comment>
<comment type="subcellular location">
    <subcellularLocation>
        <location evidence="1">Endoplasmic reticulum membrane</location>
        <topology evidence="1">Multi-pass membrane protein</topology>
    </subcellularLocation>
</comment>
<comment type="similarity">
    <text evidence="3">Belongs to the PIGG/PIGN/PIGO family. PIGG subfamily.</text>
</comment>
<evidence type="ECO:0000250" key="1"/>
<evidence type="ECO:0000255" key="2"/>
<evidence type="ECO:0000305" key="3"/>
<dbReference type="EC" id="2.-.-.-"/>
<dbReference type="EMBL" id="AE016818">
    <property type="protein sequence ID" value="AAS52519.2"/>
    <property type="molecule type" value="Genomic_DNA"/>
</dbReference>
<dbReference type="RefSeq" id="NP_984695.2">
    <property type="nucleotide sequence ID" value="NM_210048.2"/>
</dbReference>
<dbReference type="SMR" id="Q758B8"/>
<dbReference type="FunCoup" id="Q758B8">
    <property type="interactions" value="486"/>
</dbReference>
<dbReference type="STRING" id="284811.Q758B8"/>
<dbReference type="GlyCosmos" id="Q758B8">
    <property type="glycosylation" value="4 sites, No reported glycans"/>
</dbReference>
<dbReference type="EnsemblFungi" id="AAS52519">
    <property type="protein sequence ID" value="AAS52519"/>
    <property type="gene ID" value="AGOS_AEL166C"/>
</dbReference>
<dbReference type="GeneID" id="4620880"/>
<dbReference type="KEGG" id="ago:AGOS_AEL166C"/>
<dbReference type="eggNOG" id="KOG2125">
    <property type="taxonomic scope" value="Eukaryota"/>
</dbReference>
<dbReference type="HOGENOM" id="CLU_004770_0_0_1"/>
<dbReference type="InParanoid" id="Q758B8"/>
<dbReference type="OMA" id="SWNQTGQ"/>
<dbReference type="OrthoDB" id="272139at2759"/>
<dbReference type="UniPathway" id="UPA00196"/>
<dbReference type="Proteomes" id="UP000000591">
    <property type="component" value="Chromosome V"/>
</dbReference>
<dbReference type="GO" id="GO:0005789">
    <property type="term" value="C:endoplasmic reticulum membrane"/>
    <property type="evidence" value="ECO:0000318"/>
    <property type="project" value="GO_Central"/>
</dbReference>
<dbReference type="GO" id="GO:0005886">
    <property type="term" value="C:plasma membrane"/>
    <property type="evidence" value="ECO:0007669"/>
    <property type="project" value="EnsemblFungi"/>
</dbReference>
<dbReference type="GO" id="GO:0051267">
    <property type="term" value="F:CP2 mannose-ethanolamine phosphotransferase activity"/>
    <property type="evidence" value="ECO:0000318"/>
    <property type="project" value="GO_Central"/>
</dbReference>
<dbReference type="GO" id="GO:0006506">
    <property type="term" value="P:GPI anchor biosynthetic process"/>
    <property type="evidence" value="ECO:0000318"/>
    <property type="project" value="GO_Central"/>
</dbReference>
<dbReference type="CDD" id="cd16024">
    <property type="entry name" value="GPI_EPT_2"/>
    <property type="match status" value="1"/>
</dbReference>
<dbReference type="FunFam" id="3.40.720.10:FF:000045">
    <property type="entry name" value="GPI ethanolamine phosphate transferase 2"/>
    <property type="match status" value="1"/>
</dbReference>
<dbReference type="Gene3D" id="3.40.720.10">
    <property type="entry name" value="Alkaline Phosphatase, subunit A"/>
    <property type="match status" value="1"/>
</dbReference>
<dbReference type="InterPro" id="IPR017850">
    <property type="entry name" value="Alkaline_phosphatase_core_sf"/>
</dbReference>
<dbReference type="InterPro" id="IPR002591">
    <property type="entry name" value="Phosphodiest/P_Trfase"/>
</dbReference>
<dbReference type="InterPro" id="IPR037674">
    <property type="entry name" value="PIG-G_N"/>
</dbReference>
<dbReference type="InterPro" id="IPR039527">
    <property type="entry name" value="PIGG/GPI7"/>
</dbReference>
<dbReference type="InterPro" id="IPR045687">
    <property type="entry name" value="PIGG/GPI7_C"/>
</dbReference>
<dbReference type="PANTHER" id="PTHR23072:SF0">
    <property type="entry name" value="GPI ETHANOLAMINE PHOSPHATE TRANSFERASE 2"/>
    <property type="match status" value="1"/>
</dbReference>
<dbReference type="PANTHER" id="PTHR23072">
    <property type="entry name" value="PHOSPHATIDYLINOSITOL GLYCAN-RELATED"/>
    <property type="match status" value="1"/>
</dbReference>
<dbReference type="Pfam" id="PF01663">
    <property type="entry name" value="Phosphodiest"/>
    <property type="match status" value="1"/>
</dbReference>
<dbReference type="Pfam" id="PF19316">
    <property type="entry name" value="PIGO_PIGG"/>
    <property type="match status" value="1"/>
</dbReference>
<dbReference type="SUPFAM" id="SSF53649">
    <property type="entry name" value="Alkaline phosphatase-like"/>
    <property type="match status" value="1"/>
</dbReference>
<name>GPI7_EREGS</name>
<keyword id="KW-0256">Endoplasmic reticulum</keyword>
<keyword id="KW-0325">Glycoprotein</keyword>
<keyword id="KW-0337">GPI-anchor biosynthesis</keyword>
<keyword id="KW-0472">Membrane</keyword>
<keyword id="KW-1185">Reference proteome</keyword>
<keyword id="KW-0808">Transferase</keyword>
<keyword id="KW-0812">Transmembrane</keyword>
<keyword id="KW-1133">Transmembrane helix</keyword>
<proteinExistence type="inferred from homology"/>
<feature type="chain" id="PRO_0000246186" description="GPI ethanolamine phosphate transferase 2">
    <location>
        <begin position="1"/>
        <end position="806"/>
    </location>
</feature>
<feature type="transmembrane region" description="Helical" evidence="2">
    <location>
        <begin position="396"/>
        <end position="416"/>
    </location>
</feature>
<feature type="transmembrane region" description="Helical" evidence="2">
    <location>
        <begin position="425"/>
        <end position="445"/>
    </location>
</feature>
<feature type="transmembrane region" description="Helical" evidence="2">
    <location>
        <begin position="451"/>
        <end position="471"/>
    </location>
</feature>
<feature type="transmembrane region" description="Helical" evidence="2">
    <location>
        <begin position="508"/>
        <end position="528"/>
    </location>
</feature>
<feature type="transmembrane region" description="Helical" evidence="2">
    <location>
        <begin position="532"/>
        <end position="552"/>
    </location>
</feature>
<feature type="transmembrane region" description="Helical" evidence="2">
    <location>
        <begin position="593"/>
        <end position="613"/>
    </location>
</feature>
<feature type="transmembrane region" description="Helical" evidence="2">
    <location>
        <begin position="624"/>
        <end position="644"/>
    </location>
</feature>
<feature type="transmembrane region" description="Helical" evidence="2">
    <location>
        <begin position="664"/>
        <end position="684"/>
    </location>
</feature>
<feature type="transmembrane region" description="Helical" evidence="2">
    <location>
        <begin position="706"/>
        <end position="726"/>
    </location>
</feature>
<feature type="transmembrane region" description="Helical" evidence="2">
    <location>
        <begin position="745"/>
        <end position="765"/>
    </location>
</feature>
<feature type="transmembrane region" description="Helical" evidence="2">
    <location>
        <begin position="782"/>
        <end position="804"/>
    </location>
</feature>
<feature type="glycosylation site" description="N-linked (GlcNAc...) asparagine" evidence="2">
    <location>
        <position position="70"/>
    </location>
</feature>
<feature type="glycosylation site" description="N-linked (GlcNAc...) asparagine" evidence="2">
    <location>
        <position position="184"/>
    </location>
</feature>
<feature type="glycosylation site" description="N-linked (GlcNAc...) asparagine" evidence="2">
    <location>
        <position position="242"/>
    </location>
</feature>
<feature type="glycosylation site" description="N-linked (GlcNAc...) asparagine" evidence="2">
    <location>
        <position position="488"/>
    </location>
</feature>
<reference key="1">
    <citation type="journal article" date="2004" name="Science">
        <title>The Ashbya gossypii genome as a tool for mapping the ancient Saccharomyces cerevisiae genome.</title>
        <authorList>
            <person name="Dietrich F.S."/>
            <person name="Voegeli S."/>
            <person name="Brachat S."/>
            <person name="Lerch A."/>
            <person name="Gates K."/>
            <person name="Steiner S."/>
            <person name="Mohr C."/>
            <person name="Poehlmann R."/>
            <person name="Luedi P."/>
            <person name="Choi S."/>
            <person name="Wing R.A."/>
            <person name="Flavier A."/>
            <person name="Gaffney T.D."/>
            <person name="Philippsen P."/>
        </authorList>
    </citation>
    <scope>NUCLEOTIDE SEQUENCE [LARGE SCALE GENOMIC DNA]</scope>
    <source>
        <strain>ATCC 10895 / CBS 109.51 / FGSC 9923 / NRRL Y-1056</strain>
    </source>
</reference>
<reference key="2">
    <citation type="journal article" date="2013" name="G3 (Bethesda)">
        <title>Genomes of Ashbya fungi isolated from insects reveal four mating-type loci, numerous translocations, lack of transposons, and distinct gene duplications.</title>
        <authorList>
            <person name="Dietrich F.S."/>
            <person name="Voegeli S."/>
            <person name="Kuo S."/>
            <person name="Philippsen P."/>
        </authorList>
    </citation>
    <scope>GENOME REANNOTATION</scope>
    <scope>SEQUENCE REVISION TO 544</scope>
    <source>
        <strain>ATCC 10895 / CBS 109.51 / FGSC 9923 / NRRL Y-1056</strain>
    </source>
</reference>
<organism>
    <name type="scientific">Eremothecium gossypii (strain ATCC 10895 / CBS 109.51 / FGSC 9923 / NRRL Y-1056)</name>
    <name type="common">Yeast</name>
    <name type="synonym">Ashbya gossypii</name>
    <dbReference type="NCBI Taxonomy" id="284811"/>
    <lineage>
        <taxon>Eukaryota</taxon>
        <taxon>Fungi</taxon>
        <taxon>Dikarya</taxon>
        <taxon>Ascomycota</taxon>
        <taxon>Saccharomycotina</taxon>
        <taxon>Saccharomycetes</taxon>
        <taxon>Saccharomycetales</taxon>
        <taxon>Saccharomycetaceae</taxon>
        <taxon>Eremothecium</taxon>
    </lineage>
</organism>
<protein>
    <recommendedName>
        <fullName>GPI ethanolamine phosphate transferase 2</fullName>
        <ecNumber>2.-.-.-</ecNumber>
    </recommendedName>
    <alternativeName>
        <fullName>Glycosylphosphatidylinositol-anchor biosynthesis protein 7</fullName>
    </alternativeName>
</protein>
<accession>Q758B8</accession>